<feature type="chain" id="PRO_0000114870" description="Ubiquitin-like protein 5">
    <location>
        <begin position="1"/>
        <end position="73"/>
    </location>
</feature>
<feature type="domain" description="Ubiquitin-like">
    <location>
        <begin position="1"/>
        <end position="73"/>
    </location>
</feature>
<name>UBL5_DANRE</name>
<comment type="subcellular location">
    <subcellularLocation>
        <location evidence="1">Cytoplasm</location>
    </subcellularLocation>
</comment>
<protein>
    <recommendedName>
        <fullName>Ubiquitin-like protein 5</fullName>
    </recommendedName>
</protein>
<gene>
    <name type="primary">ubl5</name>
    <name type="ORF">zgc:66388</name>
</gene>
<evidence type="ECO:0000250" key="1"/>
<organism>
    <name type="scientific">Danio rerio</name>
    <name type="common">Zebrafish</name>
    <name type="synonym">Brachydanio rerio</name>
    <dbReference type="NCBI Taxonomy" id="7955"/>
    <lineage>
        <taxon>Eukaryota</taxon>
        <taxon>Metazoa</taxon>
        <taxon>Chordata</taxon>
        <taxon>Craniata</taxon>
        <taxon>Vertebrata</taxon>
        <taxon>Euteleostomi</taxon>
        <taxon>Actinopterygii</taxon>
        <taxon>Neopterygii</taxon>
        <taxon>Teleostei</taxon>
        <taxon>Ostariophysi</taxon>
        <taxon>Cypriniformes</taxon>
        <taxon>Danionidae</taxon>
        <taxon>Danioninae</taxon>
        <taxon>Danio</taxon>
    </lineage>
</organism>
<dbReference type="EMBL" id="BC055630">
    <property type="protein sequence ID" value="AAH55630.1"/>
    <property type="molecule type" value="mRNA"/>
</dbReference>
<dbReference type="RefSeq" id="NP_957435.1">
    <property type="nucleotide sequence ID" value="NM_201141.1"/>
</dbReference>
<dbReference type="SMR" id="Q7SXF2"/>
<dbReference type="FunCoup" id="Q7SXF2">
    <property type="interactions" value="1689"/>
</dbReference>
<dbReference type="GeneID" id="394116"/>
<dbReference type="KEGG" id="dre:394116"/>
<dbReference type="AGR" id="ZFIN:ZDB-GENE-040426-1629"/>
<dbReference type="ZFIN" id="ZDB-GENE-040426-1629">
    <property type="gene designation" value="zgc:66388"/>
</dbReference>
<dbReference type="InParanoid" id="Q7SXF2"/>
<dbReference type="OrthoDB" id="3881at2759"/>
<dbReference type="PhylomeDB" id="Q7SXF2"/>
<dbReference type="PRO" id="PR:Q7SXF2"/>
<dbReference type="Proteomes" id="UP000000437">
    <property type="component" value="Unplaced"/>
</dbReference>
<dbReference type="GO" id="GO:0005737">
    <property type="term" value="C:cytoplasm"/>
    <property type="evidence" value="ECO:0000318"/>
    <property type="project" value="GO_Central"/>
</dbReference>
<dbReference type="GO" id="GO:0005634">
    <property type="term" value="C:nucleus"/>
    <property type="evidence" value="ECO:0000318"/>
    <property type="project" value="GO_Central"/>
</dbReference>
<dbReference type="GO" id="GO:0031386">
    <property type="term" value="F:protein tag activity"/>
    <property type="evidence" value="ECO:0000318"/>
    <property type="project" value="GO_Central"/>
</dbReference>
<dbReference type="GO" id="GO:0000398">
    <property type="term" value="P:mRNA splicing, via spliceosome"/>
    <property type="evidence" value="ECO:0000318"/>
    <property type="project" value="GO_Central"/>
</dbReference>
<dbReference type="GO" id="GO:0036211">
    <property type="term" value="P:protein modification process"/>
    <property type="evidence" value="ECO:0000318"/>
    <property type="project" value="GO_Central"/>
</dbReference>
<dbReference type="CDD" id="cd01791">
    <property type="entry name" value="Ubl_UBL5"/>
    <property type="match status" value="1"/>
</dbReference>
<dbReference type="FunFam" id="3.10.20.90:FF:000052">
    <property type="entry name" value="Ubiquitin-like protein 5"/>
    <property type="match status" value="1"/>
</dbReference>
<dbReference type="Gene3D" id="3.10.20.90">
    <property type="entry name" value="Phosphatidylinositol 3-kinase Catalytic Subunit, Chain A, domain 1"/>
    <property type="match status" value="1"/>
</dbReference>
<dbReference type="InterPro" id="IPR039732">
    <property type="entry name" value="Hub1/Ubl5"/>
</dbReference>
<dbReference type="InterPro" id="IPR029071">
    <property type="entry name" value="Ubiquitin-like_domsf"/>
</dbReference>
<dbReference type="PANTHER" id="PTHR13042">
    <property type="entry name" value="UBIQUITIN-LIKE PROTEIN 5"/>
    <property type="match status" value="1"/>
</dbReference>
<dbReference type="SUPFAM" id="SSF54236">
    <property type="entry name" value="Ubiquitin-like"/>
    <property type="match status" value="1"/>
</dbReference>
<accession>Q7SXF2</accession>
<proteinExistence type="inferred from homology"/>
<reference key="1">
    <citation type="submission" date="2003-08" db="EMBL/GenBank/DDBJ databases">
        <authorList>
            <consortium name="NIH - Zebrafish Gene Collection (ZGC) project"/>
        </authorList>
    </citation>
    <scope>NUCLEOTIDE SEQUENCE [LARGE SCALE MRNA]</scope>
</reference>
<keyword id="KW-0963">Cytoplasm</keyword>
<keyword id="KW-1185">Reference proteome</keyword>
<keyword id="KW-0833">Ubl conjugation pathway</keyword>
<sequence>MIEVVCNDRLGKKVRVKCNQEDTIGDLKKLIAAQTGTRWEKIVLKKWYTIFKNHVSLGDYEIHDGMNLELYYL</sequence>